<dbReference type="EC" id="6.2.1.12" evidence="1"/>
<dbReference type="EMBL" id="DP000009">
    <property type="protein sequence ID" value="ABF94022.1"/>
    <property type="molecule type" value="Genomic_DNA"/>
</dbReference>
<dbReference type="EMBL" id="AP008209">
    <property type="protein sequence ID" value="BAF10906.2"/>
    <property type="status" value="ALT_SEQ"/>
    <property type="molecule type" value="Genomic_DNA"/>
</dbReference>
<dbReference type="EMBL" id="AP014959">
    <property type="protein sequence ID" value="BAS82339.1"/>
    <property type="molecule type" value="Genomic_DNA"/>
</dbReference>
<dbReference type="EMBL" id="AK242087">
    <property type="protein sequence ID" value="BAH01189.1"/>
    <property type="molecule type" value="mRNA"/>
</dbReference>
<dbReference type="RefSeq" id="XP_015629881.1">
    <property type="nucleotide sequence ID" value="XM_015774395.1"/>
</dbReference>
<dbReference type="SMR" id="Q0DV32"/>
<dbReference type="FunCoup" id="Q0DV32">
    <property type="interactions" value="2368"/>
</dbReference>
<dbReference type="STRING" id="39947.Q0DV32"/>
<dbReference type="PaxDb" id="39947-Q0DV32"/>
<dbReference type="EnsemblPlants" id="Os03t0152400-01">
    <property type="protein sequence ID" value="Os03t0152400-01"/>
    <property type="gene ID" value="Os03g0152400"/>
</dbReference>
<dbReference type="Gramene" id="Os03t0152400-01">
    <property type="protein sequence ID" value="Os03t0152400-01"/>
    <property type="gene ID" value="Os03g0152400"/>
</dbReference>
<dbReference type="KEGG" id="dosa:Os03g0152400"/>
<dbReference type="eggNOG" id="KOG1176">
    <property type="taxonomic scope" value="Eukaryota"/>
</dbReference>
<dbReference type="HOGENOM" id="CLU_000022_59_2_1"/>
<dbReference type="InParanoid" id="Q0DV32"/>
<dbReference type="OMA" id="WMGKYEW"/>
<dbReference type="OrthoDB" id="10253869at2759"/>
<dbReference type="PlantReactome" id="R-OSA-1119316">
    <property type="pathway name" value="Phenylpropanoid biosynthesis"/>
</dbReference>
<dbReference type="PlantReactome" id="R-OSA-1119531">
    <property type="pathway name" value="Flavonoid biosynthesis"/>
</dbReference>
<dbReference type="Proteomes" id="UP000000763">
    <property type="component" value="Chromosome 3"/>
</dbReference>
<dbReference type="Proteomes" id="UP000059680">
    <property type="component" value="Chromosome 3"/>
</dbReference>
<dbReference type="GO" id="GO:0016207">
    <property type="term" value="F:4-coumarate-CoA ligase activity"/>
    <property type="evidence" value="ECO:0007669"/>
    <property type="project" value="UniProtKB-ARBA"/>
</dbReference>
<dbReference type="GO" id="GO:0005524">
    <property type="term" value="F:ATP binding"/>
    <property type="evidence" value="ECO:0007669"/>
    <property type="project" value="UniProtKB-KW"/>
</dbReference>
<dbReference type="GO" id="GO:0016405">
    <property type="term" value="F:CoA-ligase activity"/>
    <property type="evidence" value="ECO:0000318"/>
    <property type="project" value="GO_Central"/>
</dbReference>
<dbReference type="GO" id="GO:0106290">
    <property type="term" value="F:trans-cinnamate-CoA ligase activity"/>
    <property type="evidence" value="ECO:0007669"/>
    <property type="project" value="UniProtKB-ARBA"/>
</dbReference>
<dbReference type="GO" id="GO:0009698">
    <property type="term" value="P:phenylpropanoid metabolic process"/>
    <property type="evidence" value="ECO:0007669"/>
    <property type="project" value="UniProtKB-ARBA"/>
</dbReference>
<dbReference type="CDD" id="cd05904">
    <property type="entry name" value="4CL"/>
    <property type="match status" value="1"/>
</dbReference>
<dbReference type="FunFam" id="3.30.300.30:FF:000007">
    <property type="entry name" value="4-coumarate--CoA ligase 2"/>
    <property type="match status" value="1"/>
</dbReference>
<dbReference type="FunFam" id="3.40.50.12780:FF:000003">
    <property type="entry name" value="Long-chain-fatty-acid--CoA ligase FadD"/>
    <property type="match status" value="1"/>
</dbReference>
<dbReference type="Gene3D" id="3.30.300.30">
    <property type="match status" value="1"/>
</dbReference>
<dbReference type="Gene3D" id="3.40.50.12780">
    <property type="entry name" value="N-terminal domain of ligase-like"/>
    <property type="match status" value="1"/>
</dbReference>
<dbReference type="InterPro" id="IPR025110">
    <property type="entry name" value="AMP-bd_C"/>
</dbReference>
<dbReference type="InterPro" id="IPR045851">
    <property type="entry name" value="AMP-bd_C_sf"/>
</dbReference>
<dbReference type="InterPro" id="IPR020845">
    <property type="entry name" value="AMP-binding_CS"/>
</dbReference>
<dbReference type="InterPro" id="IPR000873">
    <property type="entry name" value="AMP-dep_synth/lig_dom"/>
</dbReference>
<dbReference type="InterPro" id="IPR042099">
    <property type="entry name" value="ANL_N_sf"/>
</dbReference>
<dbReference type="PANTHER" id="PTHR24096:SF425">
    <property type="entry name" value="4-COUMARATE--COA LIGASE-LIKE 7"/>
    <property type="match status" value="1"/>
</dbReference>
<dbReference type="PANTHER" id="PTHR24096">
    <property type="entry name" value="LONG-CHAIN-FATTY-ACID--COA LIGASE"/>
    <property type="match status" value="1"/>
</dbReference>
<dbReference type="Pfam" id="PF00501">
    <property type="entry name" value="AMP-binding"/>
    <property type="match status" value="1"/>
</dbReference>
<dbReference type="Pfam" id="PF13193">
    <property type="entry name" value="AMP-binding_C"/>
    <property type="match status" value="1"/>
</dbReference>
<dbReference type="SUPFAM" id="SSF56801">
    <property type="entry name" value="Acetyl-CoA synthetase-like"/>
    <property type="match status" value="1"/>
</dbReference>
<dbReference type="PROSITE" id="PS00455">
    <property type="entry name" value="AMP_BINDING"/>
    <property type="match status" value="1"/>
</dbReference>
<protein>
    <recommendedName>
        <fullName>4-coumarate--CoA ligase-like 1</fullName>
        <ecNumber evidence="1">6.2.1.12</ecNumber>
    </recommendedName>
</protein>
<evidence type="ECO:0000250" key="1">
    <source>
        <dbReference type="UniProtKB" id="O24146"/>
    </source>
</evidence>
<evidence type="ECO:0000250" key="2">
    <source>
        <dbReference type="UniProtKB" id="Q42524"/>
    </source>
</evidence>
<evidence type="ECO:0000305" key="3"/>
<keyword id="KW-0067">ATP-binding</keyword>
<keyword id="KW-0436">Ligase</keyword>
<keyword id="KW-0460">Magnesium</keyword>
<keyword id="KW-0547">Nucleotide-binding</keyword>
<keyword id="KW-1185">Reference proteome</keyword>
<sequence>MASASVPAAGYGADGVYRSLRPPAPVASDPGLSLTDLLLRRADACPSAVALADAAAGGRALTFAELRSAVLSTAVALSSRAGVRPGDAVLLLAPNCVLYPVCFFAVTALGAVGTTVNPDYTPREIAKQVSDARAKLVITISALVPKIAGLRLPVILLDDDANAAAASLPPDATVTLYTNLVAGVKEADYRRPPIKQSDTAALLYSSGTTGDSKGVILTHRNFIAAARMVTSDQDERREGPNVFLCFLPMFHIFGLSVITYAQLHRGNAIIAMSRFDINSLMEAVQRHRVTHLFCVPPVIIALAKHGKAGKYDLSSLKFIGSGAAPLGKDVMEVVAKKFPDSEIVQGYGMTETCGIISLEYPEKGQAREFGSTGTLVSGVEAKIVDIKTLKHLPPNQVGEICVRGPNVMQGYFNNVQATEFTIKQGWLHTGDLGYFDGGGQLFVVDRLKELIKYKGFQIAPAELEGLLLSHPEILDAVVIPFPDAKAGEVPIAYVVRSPDSSLTEVDVQKFIEKQVAYYKRLKRVTFVGSVPKSASGKILRRQLIAQVRSSKL</sequence>
<name>4CLL1_ORYSJ</name>
<reference key="1">
    <citation type="journal article" date="2005" name="Genome Res.">
        <title>Sequence, annotation, and analysis of synteny between rice chromosome 3 and diverged grass species.</title>
        <authorList>
            <consortium name="The rice chromosome 3 sequencing consortium"/>
            <person name="Buell C.R."/>
            <person name="Yuan Q."/>
            <person name="Ouyang S."/>
            <person name="Liu J."/>
            <person name="Zhu W."/>
            <person name="Wang A."/>
            <person name="Maiti R."/>
            <person name="Haas B."/>
            <person name="Wortman J."/>
            <person name="Pertea M."/>
            <person name="Jones K.M."/>
            <person name="Kim M."/>
            <person name="Overton L."/>
            <person name="Tsitrin T."/>
            <person name="Fadrosh D."/>
            <person name="Bera J."/>
            <person name="Weaver B."/>
            <person name="Jin S."/>
            <person name="Johri S."/>
            <person name="Reardon M."/>
            <person name="Webb K."/>
            <person name="Hill J."/>
            <person name="Moffat K."/>
            <person name="Tallon L."/>
            <person name="Van Aken S."/>
            <person name="Lewis M."/>
            <person name="Utterback T."/>
            <person name="Feldblyum T."/>
            <person name="Zismann V."/>
            <person name="Iobst S."/>
            <person name="Hsiao J."/>
            <person name="de Vazeille A.R."/>
            <person name="Salzberg S.L."/>
            <person name="White O."/>
            <person name="Fraser C.M."/>
            <person name="Yu Y."/>
            <person name="Kim H."/>
            <person name="Rambo T."/>
            <person name="Currie J."/>
            <person name="Collura K."/>
            <person name="Kernodle-Thompson S."/>
            <person name="Wei F."/>
            <person name="Kudrna K."/>
            <person name="Ammiraju J.S.S."/>
            <person name="Luo M."/>
            <person name="Goicoechea J.L."/>
            <person name="Wing R.A."/>
            <person name="Henry D."/>
            <person name="Oates R."/>
            <person name="Palmer M."/>
            <person name="Pries G."/>
            <person name="Saski C."/>
            <person name="Simmons J."/>
            <person name="Soderlund C."/>
            <person name="Nelson W."/>
            <person name="de la Bastide M."/>
            <person name="Spiegel L."/>
            <person name="Nascimento L."/>
            <person name="Huang E."/>
            <person name="Preston R."/>
            <person name="Zutavern T."/>
            <person name="Palmer L."/>
            <person name="O'Shaughnessy A."/>
            <person name="Dike S."/>
            <person name="McCombie W.R."/>
            <person name="Minx P."/>
            <person name="Cordum H."/>
            <person name="Wilson R."/>
            <person name="Jin W."/>
            <person name="Lee H.R."/>
            <person name="Jiang J."/>
            <person name="Jackson S."/>
        </authorList>
    </citation>
    <scope>NUCLEOTIDE SEQUENCE [LARGE SCALE GENOMIC DNA]</scope>
    <source>
        <strain>cv. Nipponbare</strain>
    </source>
</reference>
<reference key="2">
    <citation type="journal article" date="2005" name="Nature">
        <title>The map-based sequence of the rice genome.</title>
        <authorList>
            <consortium name="International rice genome sequencing project (IRGSP)"/>
        </authorList>
    </citation>
    <scope>NUCLEOTIDE SEQUENCE [LARGE SCALE GENOMIC DNA]</scope>
    <source>
        <strain>cv. Nipponbare</strain>
    </source>
</reference>
<reference key="3">
    <citation type="journal article" date="2008" name="Nucleic Acids Res.">
        <title>The rice annotation project database (RAP-DB): 2008 update.</title>
        <authorList>
            <consortium name="The rice annotation project (RAP)"/>
        </authorList>
    </citation>
    <scope>GENOME REANNOTATION</scope>
    <source>
        <strain>cv. Nipponbare</strain>
    </source>
</reference>
<reference key="4">
    <citation type="journal article" date="2013" name="Rice">
        <title>Improvement of the Oryza sativa Nipponbare reference genome using next generation sequence and optical map data.</title>
        <authorList>
            <person name="Kawahara Y."/>
            <person name="de la Bastide M."/>
            <person name="Hamilton J.P."/>
            <person name="Kanamori H."/>
            <person name="McCombie W.R."/>
            <person name="Ouyang S."/>
            <person name="Schwartz D.C."/>
            <person name="Tanaka T."/>
            <person name="Wu J."/>
            <person name="Zhou S."/>
            <person name="Childs K.L."/>
            <person name="Davidson R.M."/>
            <person name="Lin H."/>
            <person name="Quesada-Ocampo L."/>
            <person name="Vaillancourt B."/>
            <person name="Sakai H."/>
            <person name="Lee S.S."/>
            <person name="Kim J."/>
            <person name="Numa H."/>
            <person name="Itoh T."/>
            <person name="Buell C.R."/>
            <person name="Matsumoto T."/>
        </authorList>
    </citation>
    <scope>GENOME REANNOTATION</scope>
    <source>
        <strain>cv. Nipponbare</strain>
    </source>
</reference>
<reference key="5">
    <citation type="submission" date="2006-10" db="EMBL/GenBank/DDBJ databases">
        <title>Oryza sativa full length cDNA.</title>
        <authorList>
            <consortium name="The rice full-length cDNA consortium"/>
        </authorList>
    </citation>
    <scope>NUCLEOTIDE SEQUENCE [LARGE SCALE MRNA]</scope>
    <source>
        <strain>cv. Nipponbare</strain>
    </source>
</reference>
<reference key="6">
    <citation type="journal article" date="2008" name="New Phytol.">
        <title>Genome-wide analysis of a land plant-specific acyl:coenzyme A synthetase (ACS) gene family in Arabidopsis, poplar, rice and Physcomitrella.</title>
        <authorList>
            <person name="de Azevedo Souza C."/>
            <person name="Barbazuk B."/>
            <person name="Ralph S.G."/>
            <person name="Bohlmann J."/>
            <person name="Hamberger B."/>
            <person name="Douglas C.J."/>
        </authorList>
    </citation>
    <scope>GENE FAMILY</scope>
</reference>
<comment type="function">
    <text evidence="1">Carboxylate--CoA ligase that may use 4-coumarate as substrate. Follows a two-step reaction mechanism, wherein the carboxylate substrate first undergoes adenylation by ATP, followed by a thioesterification in the presence of CoA to yield the final CoA thioester.</text>
</comment>
<comment type="catalytic activity">
    <reaction evidence="1">
        <text>(E)-4-coumarate + ATP + CoA = (E)-4-coumaroyl-CoA + AMP + diphosphate</text>
        <dbReference type="Rhea" id="RHEA:19641"/>
        <dbReference type="ChEBI" id="CHEBI:12876"/>
        <dbReference type="ChEBI" id="CHEBI:30616"/>
        <dbReference type="ChEBI" id="CHEBI:33019"/>
        <dbReference type="ChEBI" id="CHEBI:57287"/>
        <dbReference type="ChEBI" id="CHEBI:85008"/>
        <dbReference type="ChEBI" id="CHEBI:456215"/>
        <dbReference type="EC" id="6.2.1.12"/>
    </reaction>
    <physiologicalReaction direction="left-to-right" evidence="1">
        <dbReference type="Rhea" id="RHEA:19642"/>
    </physiologicalReaction>
</comment>
<comment type="catalytic activity">
    <reaction evidence="1">
        <text>(E)-4-coumarate + ATP + H(+) = (E)-4-coumaroyl-AMP + diphosphate</text>
        <dbReference type="Rhea" id="RHEA:72419"/>
        <dbReference type="ChEBI" id="CHEBI:12876"/>
        <dbReference type="ChEBI" id="CHEBI:15378"/>
        <dbReference type="ChEBI" id="CHEBI:30616"/>
        <dbReference type="ChEBI" id="CHEBI:33019"/>
        <dbReference type="ChEBI" id="CHEBI:192348"/>
    </reaction>
    <physiologicalReaction direction="left-to-right" evidence="1">
        <dbReference type="Rhea" id="RHEA:72420"/>
    </physiologicalReaction>
</comment>
<comment type="catalytic activity">
    <reaction evidence="1">
        <text>(E)-4-coumaroyl-AMP + CoA = (E)-4-coumaroyl-CoA + AMP + H(+)</text>
        <dbReference type="Rhea" id="RHEA:72423"/>
        <dbReference type="ChEBI" id="CHEBI:15378"/>
        <dbReference type="ChEBI" id="CHEBI:57287"/>
        <dbReference type="ChEBI" id="CHEBI:85008"/>
        <dbReference type="ChEBI" id="CHEBI:192348"/>
        <dbReference type="ChEBI" id="CHEBI:456215"/>
    </reaction>
    <physiologicalReaction direction="left-to-right" evidence="1">
        <dbReference type="Rhea" id="RHEA:72424"/>
    </physiologicalReaction>
</comment>
<comment type="cofactor">
    <cofactor evidence="1">
        <name>Mg(2+)</name>
        <dbReference type="ChEBI" id="CHEBI:18420"/>
    </cofactor>
</comment>
<comment type="domain">
    <text evidence="2">Both substrate-binding domains (SBD1 and SBD2) are involved in the substrate recognition, and are sufficient to confer the substrate specificity.</text>
</comment>
<comment type="similarity">
    <text evidence="3">Belongs to the ATP-dependent AMP-binding enzyme family.</text>
</comment>
<comment type="sequence caution" evidence="3">
    <conflict type="erroneous gene model prediction">
        <sequence resource="EMBL-CDS" id="BAF10906"/>
    </conflict>
</comment>
<proteinExistence type="evidence at transcript level"/>
<feature type="chain" id="PRO_0000351627" description="4-coumarate--CoA ligase-like 1">
    <location>
        <begin position="1"/>
        <end position="552"/>
    </location>
</feature>
<feature type="region of interest" description="SBD1">
    <location>
        <begin position="276"/>
        <end position="345"/>
    </location>
</feature>
<feature type="region of interest" description="SBD2">
    <location>
        <begin position="346"/>
        <end position="411"/>
    </location>
</feature>
<feature type="binding site" evidence="1">
    <location>
        <position position="205"/>
    </location>
    <ligand>
        <name>ATP</name>
        <dbReference type="ChEBI" id="CHEBI:30616"/>
    </ligand>
</feature>
<feature type="binding site" evidence="1">
    <location>
        <position position="206"/>
    </location>
    <ligand>
        <name>ATP</name>
        <dbReference type="ChEBI" id="CHEBI:30616"/>
    </ligand>
</feature>
<feature type="binding site" evidence="1">
    <location>
        <position position="207"/>
    </location>
    <ligand>
        <name>ATP</name>
        <dbReference type="ChEBI" id="CHEBI:30616"/>
    </ligand>
</feature>
<feature type="binding site" evidence="1">
    <location>
        <position position="208"/>
    </location>
    <ligand>
        <name>ATP</name>
        <dbReference type="ChEBI" id="CHEBI:30616"/>
    </ligand>
</feature>
<feature type="binding site" evidence="1">
    <location>
        <position position="209"/>
    </location>
    <ligand>
        <name>ATP</name>
        <dbReference type="ChEBI" id="CHEBI:30616"/>
    </ligand>
</feature>
<feature type="binding site" evidence="1">
    <location>
        <position position="213"/>
    </location>
    <ligand>
        <name>ATP</name>
        <dbReference type="ChEBI" id="CHEBI:30616"/>
    </ligand>
</feature>
<feature type="binding site" evidence="1">
    <location>
        <position position="253"/>
    </location>
    <ligand>
        <name>(E)-4-coumaroyl-AMP</name>
        <dbReference type="ChEBI" id="CHEBI:192348"/>
    </ligand>
</feature>
<feature type="binding site" evidence="1">
    <location>
        <position position="274"/>
    </location>
    <ligand>
        <name>CoA</name>
        <dbReference type="ChEBI" id="CHEBI:57287"/>
    </ligand>
</feature>
<feature type="binding site" evidence="1">
    <location>
        <position position="323"/>
    </location>
    <ligand>
        <name>(E)-4-coumaroyl-AMP</name>
        <dbReference type="ChEBI" id="CHEBI:192348"/>
    </ligand>
</feature>
<feature type="binding site" evidence="1">
    <location>
        <position position="345"/>
    </location>
    <ligand>
        <name>(E)-4-coumaroyl-AMP</name>
        <dbReference type="ChEBI" id="CHEBI:192348"/>
    </ligand>
</feature>
<feature type="binding site" evidence="1">
    <location>
        <position position="345"/>
    </location>
    <ligand>
        <name>ATP</name>
        <dbReference type="ChEBI" id="CHEBI:30616"/>
    </ligand>
</feature>
<feature type="binding site" evidence="1">
    <location>
        <position position="346"/>
    </location>
    <ligand>
        <name>(E)-4-coumaroyl-AMP</name>
        <dbReference type="ChEBI" id="CHEBI:192348"/>
    </ligand>
</feature>
<feature type="binding site" evidence="1">
    <location>
        <position position="346"/>
    </location>
    <ligand>
        <name>ATP</name>
        <dbReference type="ChEBI" id="CHEBI:30616"/>
    </ligand>
</feature>
<feature type="binding site" evidence="1">
    <location>
        <position position="350"/>
    </location>
    <ligand>
        <name>(E)-4-coumaroyl-AMP</name>
        <dbReference type="ChEBI" id="CHEBI:192348"/>
    </ligand>
</feature>
<feature type="binding site" evidence="1">
    <location>
        <position position="350"/>
    </location>
    <ligand>
        <name>ATP</name>
        <dbReference type="ChEBI" id="CHEBI:30616"/>
    </ligand>
</feature>
<feature type="binding site" evidence="1">
    <location>
        <position position="431"/>
    </location>
    <ligand>
        <name>ATP</name>
        <dbReference type="ChEBI" id="CHEBI:30616"/>
    </ligand>
</feature>
<feature type="binding site" evidence="1">
    <location>
        <position position="446"/>
    </location>
    <ligand>
        <name>ATP</name>
        <dbReference type="ChEBI" id="CHEBI:30616"/>
    </ligand>
</feature>
<feature type="binding site" evidence="1">
    <location>
        <position position="448"/>
    </location>
    <ligand>
        <name>(E)-4-coumaroyl-AMP</name>
        <dbReference type="ChEBI" id="CHEBI:192348"/>
    </ligand>
</feature>
<feature type="binding site" evidence="1">
    <location>
        <position position="452"/>
    </location>
    <ligand>
        <name>(E)-4-coumaroyl-AMP</name>
        <dbReference type="ChEBI" id="CHEBI:192348"/>
    </ligand>
</feature>
<feature type="binding site" evidence="1">
    <location>
        <position position="454"/>
    </location>
    <ligand>
        <name>CoA</name>
        <dbReference type="ChEBI" id="CHEBI:57287"/>
    </ligand>
</feature>
<feature type="binding site" evidence="1">
    <location>
        <position position="455"/>
    </location>
    <ligand>
        <name>CoA</name>
        <dbReference type="ChEBI" id="CHEBI:57287"/>
    </ligand>
</feature>
<feature type="binding site" evidence="1">
    <location>
        <position position="537"/>
    </location>
    <ligand>
        <name>ATP</name>
        <dbReference type="ChEBI" id="CHEBI:30616"/>
    </ligand>
</feature>
<gene>
    <name type="primary">4CLL1</name>
    <name type="ordered locus">Os03g0152400</name>
    <name type="ordered locus">LOC_Os03g05780</name>
</gene>
<organism>
    <name type="scientific">Oryza sativa subsp. japonica</name>
    <name type="common">Rice</name>
    <dbReference type="NCBI Taxonomy" id="39947"/>
    <lineage>
        <taxon>Eukaryota</taxon>
        <taxon>Viridiplantae</taxon>
        <taxon>Streptophyta</taxon>
        <taxon>Embryophyta</taxon>
        <taxon>Tracheophyta</taxon>
        <taxon>Spermatophyta</taxon>
        <taxon>Magnoliopsida</taxon>
        <taxon>Liliopsida</taxon>
        <taxon>Poales</taxon>
        <taxon>Poaceae</taxon>
        <taxon>BOP clade</taxon>
        <taxon>Oryzoideae</taxon>
        <taxon>Oryzeae</taxon>
        <taxon>Oryzinae</taxon>
        <taxon>Oryza</taxon>
        <taxon>Oryza sativa</taxon>
    </lineage>
</organism>
<accession>Q0DV32</accession>
<accession>B7F991</accession>
<accession>Q10RN5</accession>